<keyword id="KW-0479">Metal-binding</keyword>
<keyword id="KW-0862">Zinc</keyword>
<feature type="chain" id="PRO_1000057006" description="DNA gyrase inhibitor YacG">
    <location>
        <begin position="1"/>
        <end position="68"/>
    </location>
</feature>
<feature type="region of interest" description="Disordered" evidence="2">
    <location>
        <begin position="45"/>
        <end position="68"/>
    </location>
</feature>
<feature type="compositionally biased region" description="Acidic residues" evidence="2">
    <location>
        <begin position="53"/>
        <end position="68"/>
    </location>
</feature>
<feature type="binding site" evidence="1">
    <location>
        <position position="10"/>
    </location>
    <ligand>
        <name>Zn(2+)</name>
        <dbReference type="ChEBI" id="CHEBI:29105"/>
    </ligand>
</feature>
<feature type="binding site" evidence="1">
    <location>
        <position position="13"/>
    </location>
    <ligand>
        <name>Zn(2+)</name>
        <dbReference type="ChEBI" id="CHEBI:29105"/>
    </ligand>
</feature>
<feature type="binding site" evidence="1">
    <location>
        <position position="29"/>
    </location>
    <ligand>
        <name>Zn(2+)</name>
        <dbReference type="ChEBI" id="CHEBI:29105"/>
    </ligand>
</feature>
<feature type="binding site" evidence="1">
    <location>
        <position position="33"/>
    </location>
    <ligand>
        <name>Zn(2+)</name>
        <dbReference type="ChEBI" id="CHEBI:29105"/>
    </ligand>
</feature>
<name>YACG_YERPN</name>
<proteinExistence type="inferred from homology"/>
<reference key="1">
    <citation type="journal article" date="2006" name="J. Bacteriol.">
        <title>Complete genome sequence of Yersinia pestis strains Antiqua and Nepal516: evidence of gene reduction in an emerging pathogen.</title>
        <authorList>
            <person name="Chain P.S.G."/>
            <person name="Hu P."/>
            <person name="Malfatti S.A."/>
            <person name="Radnedge L."/>
            <person name="Larimer F."/>
            <person name="Vergez L.M."/>
            <person name="Worsham P."/>
            <person name="Chu M.C."/>
            <person name="Andersen G.L."/>
        </authorList>
    </citation>
    <scope>NUCLEOTIDE SEQUENCE [LARGE SCALE GENOMIC DNA]</scope>
    <source>
        <strain>Nepal516</strain>
    </source>
</reference>
<reference key="2">
    <citation type="submission" date="2009-04" db="EMBL/GenBank/DDBJ databases">
        <title>Yersinia pestis Nepal516A whole genome shotgun sequencing project.</title>
        <authorList>
            <person name="Plunkett G. III"/>
            <person name="Anderson B.D."/>
            <person name="Baumler D.J."/>
            <person name="Burland V."/>
            <person name="Cabot E.L."/>
            <person name="Glasner J.D."/>
            <person name="Mau B."/>
            <person name="Neeno-Eckwall E."/>
            <person name="Perna N.T."/>
            <person name="Munk A.C."/>
            <person name="Tapia R."/>
            <person name="Green L.D."/>
            <person name="Rogers Y.C."/>
            <person name="Detter J.C."/>
            <person name="Bruce D.C."/>
            <person name="Brettin T.S."/>
        </authorList>
    </citation>
    <scope>NUCLEOTIDE SEQUENCE [LARGE SCALE GENOMIC DNA]</scope>
    <source>
        <strain>Nepal516</strain>
    </source>
</reference>
<organism>
    <name type="scientific">Yersinia pestis bv. Antiqua (strain Nepal516)</name>
    <dbReference type="NCBI Taxonomy" id="377628"/>
    <lineage>
        <taxon>Bacteria</taxon>
        <taxon>Pseudomonadati</taxon>
        <taxon>Pseudomonadota</taxon>
        <taxon>Gammaproteobacteria</taxon>
        <taxon>Enterobacterales</taxon>
        <taxon>Yersiniaceae</taxon>
        <taxon>Yersinia</taxon>
    </lineage>
</organism>
<evidence type="ECO:0000255" key="1">
    <source>
        <dbReference type="HAMAP-Rule" id="MF_00649"/>
    </source>
</evidence>
<evidence type="ECO:0000256" key="2">
    <source>
        <dbReference type="SAM" id="MobiDB-lite"/>
    </source>
</evidence>
<gene>
    <name evidence="1" type="primary">yacG</name>
    <name type="ordered locus">YPN_0657</name>
    <name type="ORF">YP516_0695</name>
</gene>
<comment type="function">
    <text evidence="1">Inhibits all the catalytic activities of DNA gyrase by preventing its interaction with DNA. Acts by binding directly to the C-terminal domain of GyrB, which probably disrupts DNA binding by the gyrase.</text>
</comment>
<comment type="cofactor">
    <cofactor evidence="1">
        <name>Zn(2+)</name>
        <dbReference type="ChEBI" id="CHEBI:29105"/>
    </cofactor>
    <text evidence="1">Binds 1 zinc ion.</text>
</comment>
<comment type="subunit">
    <text evidence="1">Interacts with GyrB.</text>
</comment>
<comment type="similarity">
    <text evidence="1">Belongs to the DNA gyrase inhibitor YacG family.</text>
</comment>
<protein>
    <recommendedName>
        <fullName evidence="1">DNA gyrase inhibitor YacG</fullName>
    </recommendedName>
</protein>
<dbReference type="EMBL" id="CP000305">
    <property type="protein sequence ID" value="ABG16989.1"/>
    <property type="molecule type" value="Genomic_DNA"/>
</dbReference>
<dbReference type="EMBL" id="ACNQ01000007">
    <property type="protein sequence ID" value="EEO77844.1"/>
    <property type="molecule type" value="Genomic_DNA"/>
</dbReference>
<dbReference type="RefSeq" id="WP_002209317.1">
    <property type="nucleotide sequence ID" value="NZ_ACNQ01000007.1"/>
</dbReference>
<dbReference type="SMR" id="Q1CLZ1"/>
<dbReference type="GeneID" id="57975278"/>
<dbReference type="KEGG" id="ypn:YPN_0657"/>
<dbReference type="HOGENOM" id="CLU_178280_3_1_6"/>
<dbReference type="Proteomes" id="UP000008936">
    <property type="component" value="Chromosome"/>
</dbReference>
<dbReference type="GO" id="GO:0008657">
    <property type="term" value="F:DNA topoisomerase type II (double strand cut, ATP-hydrolyzing) inhibitor activity"/>
    <property type="evidence" value="ECO:0007669"/>
    <property type="project" value="UniProtKB-UniRule"/>
</dbReference>
<dbReference type="GO" id="GO:0008270">
    <property type="term" value="F:zinc ion binding"/>
    <property type="evidence" value="ECO:0007669"/>
    <property type="project" value="UniProtKB-UniRule"/>
</dbReference>
<dbReference type="GO" id="GO:0006355">
    <property type="term" value="P:regulation of DNA-templated transcription"/>
    <property type="evidence" value="ECO:0007669"/>
    <property type="project" value="InterPro"/>
</dbReference>
<dbReference type="Gene3D" id="3.30.50.10">
    <property type="entry name" value="Erythroid Transcription Factor GATA-1, subunit A"/>
    <property type="match status" value="1"/>
</dbReference>
<dbReference type="HAMAP" id="MF_00649">
    <property type="entry name" value="DNA_gyrase_inhibitor_YacG"/>
    <property type="match status" value="1"/>
</dbReference>
<dbReference type="InterPro" id="IPR005584">
    <property type="entry name" value="DNA_gyrase_inhibitor_YacG"/>
</dbReference>
<dbReference type="InterPro" id="IPR013088">
    <property type="entry name" value="Znf_NHR/GATA"/>
</dbReference>
<dbReference type="NCBIfam" id="NF001638">
    <property type="entry name" value="PRK00418.1"/>
    <property type="match status" value="1"/>
</dbReference>
<dbReference type="PANTHER" id="PTHR36150">
    <property type="entry name" value="DNA GYRASE INHIBITOR YACG"/>
    <property type="match status" value="1"/>
</dbReference>
<dbReference type="PANTHER" id="PTHR36150:SF1">
    <property type="entry name" value="DNA GYRASE INHIBITOR YACG"/>
    <property type="match status" value="1"/>
</dbReference>
<dbReference type="Pfam" id="PF03884">
    <property type="entry name" value="YacG"/>
    <property type="match status" value="1"/>
</dbReference>
<dbReference type="SUPFAM" id="SSF57716">
    <property type="entry name" value="Glucocorticoid receptor-like (DNA-binding domain)"/>
    <property type="match status" value="1"/>
</dbReference>
<sequence>MESEQIQVNCPTCGKVVIWGEQSPFRPFCCKRCQLIDLGEWADEEKRIPSDTELSDSDEWSEEDPLKH</sequence>
<accession>Q1CLZ1</accession>
<accession>C4GQ18</accession>